<comment type="function">
    <molecule>RNA replication polyprotein</molecule>
    <text evidence="1 4">RNA-directed RNA polymerase involved in viral RNA replication.</text>
</comment>
<comment type="function">
    <text evidence="1">Protease: Thiol protease that cleaves the polyprotein.</text>
</comment>
<comment type="catalytic activity">
    <reaction evidence="4">
        <text>RNA(n) + a ribonucleoside 5'-triphosphate = RNA(n+1) + diphosphate</text>
        <dbReference type="Rhea" id="RHEA:21248"/>
        <dbReference type="Rhea" id="RHEA-COMP:14527"/>
        <dbReference type="Rhea" id="RHEA-COMP:17342"/>
        <dbReference type="ChEBI" id="CHEBI:33019"/>
        <dbReference type="ChEBI" id="CHEBI:61557"/>
        <dbReference type="ChEBI" id="CHEBI:140395"/>
        <dbReference type="EC" id="2.7.7.48"/>
    </reaction>
</comment>
<comment type="catalytic activity">
    <reaction>
        <text>ATP + H2O = ADP + phosphate + H(+)</text>
        <dbReference type="Rhea" id="RHEA:13065"/>
        <dbReference type="ChEBI" id="CHEBI:15377"/>
        <dbReference type="ChEBI" id="CHEBI:15378"/>
        <dbReference type="ChEBI" id="CHEBI:30616"/>
        <dbReference type="ChEBI" id="CHEBI:43474"/>
        <dbReference type="ChEBI" id="CHEBI:456216"/>
        <dbReference type="EC" id="3.6.4.13"/>
    </reaction>
</comment>
<comment type="PTM">
    <text evidence="1">Specific enzymatic cleavages by the viral protease yield mature proteins.</text>
</comment>
<comment type="similarity">
    <text evidence="9">Belongs to the potexviruses/carlaviruses RNA replication protein family.</text>
</comment>
<dbReference type="EC" id="2.1.1.-" evidence="9"/>
<dbReference type="EC" id="1.14.11.-" evidence="5"/>
<dbReference type="EC" id="3.4.22.-" evidence="1"/>
<dbReference type="EC" id="2.7.7.48" evidence="4"/>
<dbReference type="EC" id="3.6.4.13" evidence="9"/>
<dbReference type="EMBL" id="D14449">
    <property type="protein sequence ID" value="BAA03339.1"/>
    <property type="molecule type" value="Genomic_RNA"/>
</dbReference>
<dbReference type="PIR" id="PN0093">
    <property type="entry name" value="PN0093"/>
</dbReference>
<dbReference type="RefSeq" id="NP_056767.1">
    <property type="nucleotide sequence ID" value="NC_001361.2"/>
</dbReference>
<dbReference type="KEGG" id="vg:1493995"/>
<dbReference type="Proteomes" id="UP000000677">
    <property type="component" value="Segment"/>
</dbReference>
<dbReference type="GO" id="GO:0005524">
    <property type="term" value="F:ATP binding"/>
    <property type="evidence" value="ECO:0007669"/>
    <property type="project" value="UniProtKB-KW"/>
</dbReference>
<dbReference type="GO" id="GO:0016887">
    <property type="term" value="F:ATP hydrolysis activity"/>
    <property type="evidence" value="ECO:0007669"/>
    <property type="project" value="RHEA"/>
</dbReference>
<dbReference type="GO" id="GO:0008234">
    <property type="term" value="F:cysteine-type peptidase activity"/>
    <property type="evidence" value="ECO:0007669"/>
    <property type="project" value="UniProtKB-KW"/>
</dbReference>
<dbReference type="GO" id="GO:0051213">
    <property type="term" value="F:dioxygenase activity"/>
    <property type="evidence" value="ECO:0007669"/>
    <property type="project" value="UniProtKB-KW"/>
</dbReference>
<dbReference type="GO" id="GO:0008174">
    <property type="term" value="F:mRNA methyltransferase activity"/>
    <property type="evidence" value="ECO:0007669"/>
    <property type="project" value="InterPro"/>
</dbReference>
<dbReference type="GO" id="GO:0003723">
    <property type="term" value="F:RNA binding"/>
    <property type="evidence" value="ECO:0007669"/>
    <property type="project" value="InterPro"/>
</dbReference>
<dbReference type="GO" id="GO:0003724">
    <property type="term" value="F:RNA helicase activity"/>
    <property type="evidence" value="ECO:0007669"/>
    <property type="project" value="UniProtKB-EC"/>
</dbReference>
<dbReference type="GO" id="GO:0003968">
    <property type="term" value="F:RNA-directed RNA polymerase activity"/>
    <property type="evidence" value="ECO:0007669"/>
    <property type="project" value="UniProtKB-KW"/>
</dbReference>
<dbReference type="GO" id="GO:0006351">
    <property type="term" value="P:DNA-templated transcription"/>
    <property type="evidence" value="ECO:0007669"/>
    <property type="project" value="InterPro"/>
</dbReference>
<dbReference type="GO" id="GO:0032259">
    <property type="term" value="P:methylation"/>
    <property type="evidence" value="ECO:0007669"/>
    <property type="project" value="UniProtKB-KW"/>
</dbReference>
<dbReference type="GO" id="GO:0016556">
    <property type="term" value="P:mRNA modification"/>
    <property type="evidence" value="ECO:0007669"/>
    <property type="project" value="InterPro"/>
</dbReference>
<dbReference type="GO" id="GO:0006508">
    <property type="term" value="P:proteolysis"/>
    <property type="evidence" value="ECO:0007669"/>
    <property type="project" value="UniProtKB-KW"/>
</dbReference>
<dbReference type="GO" id="GO:0006396">
    <property type="term" value="P:RNA processing"/>
    <property type="evidence" value="ECO:0007669"/>
    <property type="project" value="InterPro"/>
</dbReference>
<dbReference type="GO" id="GO:0039694">
    <property type="term" value="P:viral RNA genome replication"/>
    <property type="evidence" value="ECO:0007669"/>
    <property type="project" value="InterPro"/>
</dbReference>
<dbReference type="CDD" id="cd23245">
    <property type="entry name" value="Betaflexiviridae_RdRp"/>
    <property type="match status" value="1"/>
</dbReference>
<dbReference type="CDD" id="cd22792">
    <property type="entry name" value="OTU_RDRP-like"/>
    <property type="match status" value="1"/>
</dbReference>
<dbReference type="InterPro" id="IPR027351">
    <property type="entry name" value="(+)RNA_virus_helicase_core_dom"/>
</dbReference>
<dbReference type="InterPro" id="IPR002588">
    <property type="entry name" value="Alphavirus-like_MT_dom"/>
</dbReference>
<dbReference type="InterPro" id="IPR043502">
    <property type="entry name" value="DNA/RNA_pol_sf"/>
</dbReference>
<dbReference type="InterPro" id="IPR003323">
    <property type="entry name" value="OTU_dom"/>
</dbReference>
<dbReference type="InterPro" id="IPR027417">
    <property type="entry name" value="P-loop_NTPase"/>
</dbReference>
<dbReference type="InterPro" id="IPR008041">
    <property type="entry name" value="Peptidase_C23"/>
</dbReference>
<dbReference type="InterPro" id="IPR001788">
    <property type="entry name" value="RNA-dep_RNA_pol_alsuvir"/>
</dbReference>
<dbReference type="InterPro" id="IPR007094">
    <property type="entry name" value="RNA-dir_pol_PSvirus"/>
</dbReference>
<dbReference type="Pfam" id="PF05379">
    <property type="entry name" value="Peptidase_C23"/>
    <property type="match status" value="1"/>
</dbReference>
<dbReference type="Pfam" id="PF00978">
    <property type="entry name" value="RdRP_2"/>
    <property type="match status" value="1"/>
</dbReference>
<dbReference type="Pfam" id="PF01443">
    <property type="entry name" value="Viral_helicase1"/>
    <property type="match status" value="1"/>
</dbReference>
<dbReference type="Pfam" id="PF01660">
    <property type="entry name" value="Vmethyltransf"/>
    <property type="match status" value="1"/>
</dbReference>
<dbReference type="SUPFAM" id="SSF56672">
    <property type="entry name" value="DNA/RNA polymerases"/>
    <property type="match status" value="1"/>
</dbReference>
<dbReference type="SUPFAM" id="SSF52540">
    <property type="entry name" value="P-loop containing nucleoside triphosphate hydrolases"/>
    <property type="match status" value="1"/>
</dbReference>
<dbReference type="PROSITE" id="PS51743">
    <property type="entry name" value="ALPHAVIRUS_MT"/>
    <property type="match status" value="1"/>
</dbReference>
<dbReference type="PROSITE" id="PS50802">
    <property type="entry name" value="OTU"/>
    <property type="match status" value="1"/>
</dbReference>
<dbReference type="PROSITE" id="PS51492">
    <property type="entry name" value="PEPTIDASE_C23"/>
    <property type="match status" value="1"/>
</dbReference>
<dbReference type="PROSITE" id="PS51657">
    <property type="entry name" value="PSRV_HELICASE"/>
    <property type="match status" value="1"/>
</dbReference>
<dbReference type="PROSITE" id="PS50507">
    <property type="entry name" value="RDRP_SSRNA_POS"/>
    <property type="match status" value="1"/>
</dbReference>
<accession>P17965</accession>
<accession>Q89548</accession>
<organismHost>
    <name type="scientific">Solanum tuberosum</name>
    <name type="common">Potato</name>
    <dbReference type="NCBI Taxonomy" id="4113"/>
</organismHost>
<feature type="chain" id="PRO_0000222563" description="RNA replication polyprotein">
    <location>
        <begin position="1"/>
        <end position="1968"/>
    </location>
</feature>
<feature type="chain" id="PRO_0000431908" description="Helicase" evidence="1">
    <location>
        <begin position="1473"/>
        <end position="1968"/>
    </location>
</feature>
<feature type="domain" description="Alphavirus-like MT" evidence="8">
    <location>
        <begin position="63"/>
        <end position="254"/>
    </location>
</feature>
<feature type="domain" description="OTU" evidence="3">
    <location>
        <begin position="883"/>
        <end position="991"/>
    </location>
</feature>
<feature type="domain" description="Peptidase C23" evidence="6">
    <location>
        <begin position="990"/>
        <end position="1080"/>
    </location>
</feature>
<feature type="domain" description="(+)RNA virus helicase ATP-binding" evidence="7">
    <location>
        <begin position="1134"/>
        <end position="1316"/>
    </location>
</feature>
<feature type="domain" description="(+)RNA virus helicase C-terminal">
    <location>
        <begin position="1317"/>
        <end position="1454"/>
    </location>
</feature>
<feature type="domain" description="RdRp catalytic" evidence="4">
    <location>
        <begin position="1749"/>
        <end position="1856"/>
    </location>
</feature>
<feature type="active site" evidence="1">
    <location>
        <position position="994"/>
    </location>
</feature>
<feature type="active site" evidence="1">
    <location>
        <position position="1075"/>
    </location>
</feature>
<feature type="binding site" evidence="7">
    <location>
        <begin position="1166"/>
        <end position="1173"/>
    </location>
    <ligand>
        <name>ATP</name>
        <dbReference type="ChEBI" id="CHEBI:30616"/>
    </ligand>
</feature>
<feature type="site" description="Cleavage; by viral protease" evidence="1">
    <location>
        <begin position="1472"/>
        <end position="1473"/>
    </location>
</feature>
<reference key="1">
    <citation type="journal article" date="1991" name="J. Gen. Virol.">
        <title>The genome organization of potato virus M RNA.</title>
        <authorList>
            <person name="Zavriev S.K."/>
            <person name="Kanyuka K.V."/>
            <person name="Levay K.E."/>
        </authorList>
    </citation>
    <scope>NUCLEOTIDE SEQUENCE [GENOMIC RNA]</scope>
</reference>
<reference key="2">
    <citation type="journal article" date="1991" name="Mol. Biol. (Mosk.)">
        <title>Complete nucleotide sequence of genomic RNA of the potato M-virus.</title>
        <authorList>
            <person name="Zavriev S.K."/>
            <person name="Kaniuka K.V."/>
            <person name="Levai K.E."/>
        </authorList>
    </citation>
    <scope>NUCLEOTIDE SEQUENCE [GENOMIC RNA]</scope>
</reference>
<organism>
    <name type="scientific">Potato virus M (strain Russian)</name>
    <name type="common">PVM</name>
    <dbReference type="NCBI Taxonomy" id="12168"/>
    <lineage>
        <taxon>Viruses</taxon>
        <taxon>Riboviria</taxon>
        <taxon>Orthornavirae</taxon>
        <taxon>Kitrinoviricota</taxon>
        <taxon>Alsuviricetes</taxon>
        <taxon>Tymovirales</taxon>
        <taxon>Betaflexiviridae</taxon>
        <taxon>Quinvirinae</taxon>
        <taxon>Carlavirus</taxon>
        <taxon>Potato virus M</taxon>
    </lineage>
</organism>
<proteinExistence type="inferred from homology"/>
<protein>
    <recommendedName>
        <fullName evidence="1">RNA replication polyprotein</fullName>
    </recommendedName>
    <alternativeName>
        <fullName evidence="1">ORF1 protein</fullName>
    </alternativeName>
    <domain>
        <recommendedName>
            <fullName evidence="2">Viral methyltransferase</fullName>
            <ecNumber evidence="9">2.1.1.-</ecNumber>
        </recommendedName>
    </domain>
    <domain>
        <recommendedName>
            <fullName evidence="2">Putative Fe(2+) 2-oxoglutarate dioxygenase</fullName>
            <ecNumber evidence="5">1.14.11.-</ecNumber>
        </recommendedName>
    </domain>
    <domain>
        <recommendedName>
            <fullName evidence="1">Protease</fullName>
            <ecNumber evidence="1">3.4.22.-</ecNumber>
        </recommendedName>
    </domain>
    <domain>
        <recommendedName>
            <fullName evidence="4">RNA-directed RNA polymerase</fullName>
            <ecNumber evidence="4">2.7.7.48</ecNumber>
        </recommendedName>
    </domain>
    <component>
        <recommendedName>
            <fullName evidence="1">Helicase</fullName>
            <ecNumber evidence="9">3.6.4.13</ecNumber>
        </recommendedName>
    </component>
</protein>
<keyword id="KW-0067">ATP-binding</keyword>
<keyword id="KW-0223">Dioxygenase</keyword>
<keyword id="KW-0347">Helicase</keyword>
<keyword id="KW-0378">Hydrolase</keyword>
<keyword id="KW-0489">Methyltransferase</keyword>
<keyword id="KW-0511">Multifunctional enzyme</keyword>
<keyword id="KW-0547">Nucleotide-binding</keyword>
<keyword id="KW-0548">Nucleotidyltransferase</keyword>
<keyword id="KW-0560">Oxidoreductase</keyword>
<keyword id="KW-0645">Protease</keyword>
<keyword id="KW-1185">Reference proteome</keyword>
<keyword id="KW-0696">RNA-directed RNA polymerase</keyword>
<keyword id="KW-0788">Thiol protease</keyword>
<keyword id="KW-0808">Transferase</keyword>
<keyword id="KW-0693">Viral RNA replication</keyword>
<name>RDRP_PVMR</name>
<evidence type="ECO:0000250" key="1">
    <source>
        <dbReference type="UniProtKB" id="Q65652"/>
    </source>
</evidence>
<evidence type="ECO:0000255" key="2"/>
<evidence type="ECO:0000255" key="3">
    <source>
        <dbReference type="PROSITE-ProRule" id="PRU00139"/>
    </source>
</evidence>
<evidence type="ECO:0000255" key="4">
    <source>
        <dbReference type="PROSITE-ProRule" id="PRU00539"/>
    </source>
</evidence>
<evidence type="ECO:0000255" key="5">
    <source>
        <dbReference type="PROSITE-ProRule" id="PRU00805"/>
    </source>
</evidence>
<evidence type="ECO:0000255" key="6">
    <source>
        <dbReference type="PROSITE-ProRule" id="PRU00825"/>
    </source>
</evidence>
<evidence type="ECO:0000255" key="7">
    <source>
        <dbReference type="PROSITE-ProRule" id="PRU00990"/>
    </source>
</evidence>
<evidence type="ECO:0000255" key="8">
    <source>
        <dbReference type="PROSITE-ProRule" id="PRU01079"/>
    </source>
</evidence>
<evidence type="ECO:0000305" key="9"/>
<sequence length="1968" mass="223386">MAVTYRTPMEDIVNCFEPATQAVIANSAATLYKNFEEQHCQYFNYYLSPLAKRKLSMAGIYLSPYSAVVHSHPVCKTLENYILYSVLPSYINSSFYFVGIKERKLQLLKSKCKNLDSVQVVNRYVTSADRMRYTNDFVPYGSYEHECLVHKGVGLDNEALRGLVGPLRRHKAKNLFFHDELHYWSSKVLIDFLDVMRPDKLLGTVVYPPELLFKPTRSLNEWCYTYDIVGDTLMFFPDGVQSEGYQQPLKGGYLLGARSLKLPDGTVYMVDVLCSKFPHHLISITKGEAAAPTHRAFGPFEAVASEALKATLSPDYPCAFPVSYEVVNKIYRYLRTLKKPDEQSAIAKLSQIIAEPSGREIDFVECFARLVIHNSSMCATIMPEQLKEFMGNWLGKMPSVLARRFSSVRAVCVNKFIRGLKPYSFTLRLNEITWWNIWENSYAWFFDTDAEVDVPEKLDSLFMGEGAGLVAHITSRPYVGTVPLADREWNALLCMDSQKLLHAMRRMFMRGAWGAHMCVISREFLLKYVEARLKSSCLIAKARRRGQHKEKLEAWEVLGLKSSDALFRAMTYLCNARLEPMFSESGLRFFLTRGRNNLYGLTNYTEGKRAVTGVQNLWSNVVHEVSTKRHKGMIRLEKARVTEQPRSEFASCVLEPEVWRDVEAALDIELGEVACACNARFVQGVVLSNQAGLNVREQVAGASVGLYTKDRSNLKWGNSELLSNGWGRSLSVWMEINSVSQKFDVAVRLSYSKETQMNVLLPSLDGIERGAGATVVNLRKCGAFIVRCARGWRLALAWMDHICLEVMANVAYGHECYMRSWGTMDVVVFLKRATVSEQVTFESAQEVGPIEGKSDSGAPGVGVNLDLGGVVGSEYPANGAERYKRVSGPGDGCCCWHSFAYLVGMHHMELKRLCTSHVFENAALNVELEQCKASGAFVTHAAILATALRLRAEIRVHNAGTGRVHRFAPKQKNMALDLWLESEHYEPQVLRNGCVIESVAQALGTRNADILAVVEERCCEEVVESVQAGLGLNLHHVEIVLQCFDIVGHCNLGDKEITLNAGGKMPFCFDISDEHMSFCGRRKDPICKLVSGALHGKMFAESALLDLENCGLKIDFEPNWNRAGMLADSMYQGATGVLGSALFNNKRNMREKFVRNVSLSLHAIVGTFGSGKSTLFKNLLKYGAGKSLDFVSPRRALAEDFKRTVGMNERGGRAKAGQENWRVTTLETFLARVEFLTEGQVVILDEMQLYPPGYFDLVVSMLKVDVRLFLVGDPAQSDYDSEKDRLVLGAMEENMSVVLGAREYNYKVRSHRFLNCNFIGRLPCEINKDDCTIDEPHIMRMHLENLLDVAEEYKSVVLVSSFDEKMVVCAHLPEAKVLTFGESTGLTFMHGTIYISAVSERTNERRWITALRRFRFNLCFVNCSGMDYQQLAGRYKGRVRSKFLCKTAIPDDLNSMLPGQALFKSEYPRLIGKDEGVREEKLAGDPWLKTMINLYQAPEVEIAEEPEVVMQEEWFRTHLPRDELESVRAQWVHKILAKEYREVRMGDMVSEQFTHDHTKQLGAKQLTNAAERFETIYPRHRASDTVTFLMAVKKRLSFSNPGKEKGNLFHAASYGKALLSEFLKRVPLKPNHNVRFMEEALWNFEEKKLSKSAATIENHSGRSCRDWPTDVAQIFSKSQLCTKFDNRFRVAKAAQSIVCFQHAVLCRFAPYMRYIEMKVHEVLPKNYYIHSGKGLEELDAWVKKGKFDRICTESDYEAFDASQDEFIMAFELELMKYLRLPSDLIEDYKFIKTSLGSKLGNFAIMRFSGEASTFLFNTLANMLFTFMRYNIRGDEFICFAGDDMCASRRLQPTKKFAHFLDKLKLKAKVQFVQFVNKPTFCGWHLCPDGIYKKPQLVLERMCIAKEMNNLSNCIDNYAIEVAYAYKLGEKAVNRMDEEEVAAFYNCVRIIVRNKHLIRSDVKQVFEVL</sequence>
<gene>
    <name evidence="1" type="ORF">ORF1</name>
</gene>